<keyword id="KW-0903">Direct protein sequencing</keyword>
<keyword id="KW-0372">Hormone</keyword>
<keyword id="KW-1185">Reference proteome</keyword>
<proteinExistence type="evidence at protein level"/>
<evidence type="ECO:0000255" key="1">
    <source>
        <dbReference type="PROSITE-ProRule" id="PRU00314"/>
    </source>
</evidence>
<evidence type="ECO:0000305" key="2"/>
<comment type="function">
    <text>Hormone of the thymus with pleiotropic actions on prothymocytes, mature T-cells, the nicotinic acetylcholine receptor, and pituitary corticotrophs.</text>
</comment>
<comment type="similarity">
    <text evidence="2">Belongs to the thymopoietin family.</text>
</comment>
<organism>
    <name type="scientific">Bos taurus</name>
    <name type="common">Bovine</name>
    <dbReference type="NCBI Taxonomy" id="9913"/>
    <lineage>
        <taxon>Eukaryota</taxon>
        <taxon>Metazoa</taxon>
        <taxon>Chordata</taxon>
        <taxon>Craniata</taxon>
        <taxon>Vertebrata</taxon>
        <taxon>Euteleostomi</taxon>
        <taxon>Mammalia</taxon>
        <taxon>Eutheria</taxon>
        <taxon>Laurasiatheria</taxon>
        <taxon>Artiodactyla</taxon>
        <taxon>Ruminantia</taxon>
        <taxon>Pecora</taxon>
        <taxon>Bovidae</taxon>
        <taxon>Bovinae</taxon>
        <taxon>Bos</taxon>
    </lineage>
</organism>
<dbReference type="PIR" id="A01517">
    <property type="entry name" value="TOBO1"/>
</dbReference>
<dbReference type="SMR" id="P01249"/>
<dbReference type="PeptideAtlas" id="P01249"/>
<dbReference type="InParanoid" id="P01249"/>
<dbReference type="Proteomes" id="UP000009136">
    <property type="component" value="Unplaced"/>
</dbReference>
<dbReference type="GO" id="GO:0003677">
    <property type="term" value="F:DNA binding"/>
    <property type="evidence" value="ECO:0007669"/>
    <property type="project" value="InterPro"/>
</dbReference>
<dbReference type="GO" id="GO:0005179">
    <property type="term" value="F:hormone activity"/>
    <property type="evidence" value="ECO:0007669"/>
    <property type="project" value="UniProtKB-KW"/>
</dbReference>
<dbReference type="CDD" id="cd12935">
    <property type="entry name" value="LEM_like"/>
    <property type="match status" value="1"/>
</dbReference>
<dbReference type="FunFam" id="1.10.720.40:FF:000003">
    <property type="entry name" value="thymopoietin isoform X1"/>
    <property type="match status" value="1"/>
</dbReference>
<dbReference type="Gene3D" id="1.10.720.40">
    <property type="match status" value="1"/>
</dbReference>
<dbReference type="InterPro" id="IPR013146">
    <property type="entry name" value="LEM-like_dom"/>
</dbReference>
<dbReference type="InterPro" id="IPR011015">
    <property type="entry name" value="LEM/LEM-like_dom_sf"/>
</dbReference>
<dbReference type="InterPro" id="IPR051656">
    <property type="entry name" value="LEM_domain"/>
</dbReference>
<dbReference type="PANTHER" id="PTHR12019">
    <property type="entry name" value="LAMINA-ASSOCIATED POLYPEPTIDE THYMOPOIETIN"/>
    <property type="match status" value="1"/>
</dbReference>
<dbReference type="PANTHER" id="PTHR12019:SF9">
    <property type="entry name" value="THYMOPOIETIN"/>
    <property type="match status" value="1"/>
</dbReference>
<dbReference type="Pfam" id="PF08198">
    <property type="entry name" value="Thymopoietin"/>
    <property type="match status" value="1"/>
</dbReference>
<dbReference type="SMART" id="SM01261">
    <property type="entry name" value="Thymopoietin"/>
    <property type="match status" value="1"/>
</dbReference>
<dbReference type="SUPFAM" id="SSF63451">
    <property type="entry name" value="LEM domain"/>
    <property type="match status" value="1"/>
</dbReference>
<dbReference type="PROSITE" id="PS50955">
    <property type="entry name" value="LEM_LIKE"/>
    <property type="match status" value="1"/>
</dbReference>
<protein>
    <recommendedName>
        <fullName>Thymopoietin-1</fullName>
    </recommendedName>
    <alternativeName>
        <fullName>Thymopoietin I</fullName>
    </alternativeName>
</protein>
<accession>P01249</accession>
<reference key="1">
    <citation type="journal article" date="1981" name="Biochemistry">
        <title>Complete amino acid sequences of bovine thymopoietins I, II, and III: closely homologous polypeptides.</title>
        <authorList>
            <person name="Audhya T."/>
            <person name="Schlesinger D.H."/>
            <person name="Goldstein G."/>
        </authorList>
    </citation>
    <scope>PROTEIN SEQUENCE</scope>
</reference>
<feature type="chain" id="PRO_0000072524" description="Thymopoietin-1">
    <location>
        <begin position="1"/>
        <end position="49"/>
    </location>
</feature>
<feature type="domain" description="LEM-like" evidence="1">
    <location>
        <begin position="4"/>
        <end position="47"/>
    </location>
</feature>
<feature type="region of interest" description="Biological activity">
    <location>
        <begin position="32"/>
        <end position="36"/>
    </location>
</feature>
<name>THP1_BOVIN</name>
<sequence length="49" mass="5583">GQFLEDPSVLTKEKLKSELVANNVTLPAGEQRKDVYVELYLQHLTALKR</sequence>